<name>Y1901_AQUAE</name>
<feature type="chain" id="PRO_0000186957" description="VapC ribonuclease aq_1901">
    <location>
        <begin position="1"/>
        <end position="135"/>
    </location>
</feature>
<feature type="domain" description="PINc">
    <location>
        <begin position="3"/>
        <end position="130"/>
    </location>
</feature>
<feature type="binding site" evidence="2">
    <location>
        <position position="5"/>
    </location>
    <ligand>
        <name>Mg(2+)</name>
        <dbReference type="ChEBI" id="CHEBI:18420"/>
    </ligand>
</feature>
<reference key="1">
    <citation type="journal article" date="1998" name="Nature">
        <title>The complete genome of the hyperthermophilic bacterium Aquifex aeolicus.</title>
        <authorList>
            <person name="Deckert G."/>
            <person name="Warren P.V."/>
            <person name="Gaasterland T."/>
            <person name="Young W.G."/>
            <person name="Lenox A.L."/>
            <person name="Graham D.E."/>
            <person name="Overbeek R."/>
            <person name="Snead M.A."/>
            <person name="Keller M."/>
            <person name="Aujay M."/>
            <person name="Huber R."/>
            <person name="Feldman R.A."/>
            <person name="Short J.M."/>
            <person name="Olsen G.J."/>
            <person name="Swanson R.V."/>
        </authorList>
    </citation>
    <scope>NUCLEOTIDE SEQUENCE [LARGE SCALE GENOMIC DNA]</scope>
    <source>
        <strain>VF5</strain>
    </source>
</reference>
<gene>
    <name type="ordered locus">aq_1901</name>
</gene>
<sequence length="135" mass="15984">MKLLDTTVLLDFLSGEEEKVETIEQFFEELSQKGEKLFVPEEVIIELVYFLEHGYKWEREDIYEVVETILNDELFNVELKPFIREAIKLYSKRQGTFLDCLKSVKAKKMGIKEVVSFGRRFKKLGFKTVNPYEES</sequence>
<evidence type="ECO:0000250" key="1"/>
<evidence type="ECO:0000255" key="2"/>
<evidence type="ECO:0000305" key="3"/>
<organism>
    <name type="scientific">Aquifex aeolicus (strain VF5)</name>
    <dbReference type="NCBI Taxonomy" id="224324"/>
    <lineage>
        <taxon>Bacteria</taxon>
        <taxon>Pseudomonadati</taxon>
        <taxon>Aquificota</taxon>
        <taxon>Aquificia</taxon>
        <taxon>Aquificales</taxon>
        <taxon>Aquificaceae</taxon>
        <taxon>Aquifex</taxon>
    </lineage>
</organism>
<keyword id="KW-0378">Hydrolase</keyword>
<keyword id="KW-0460">Magnesium</keyword>
<keyword id="KW-0479">Metal-binding</keyword>
<keyword id="KW-0540">Nuclease</keyword>
<keyword id="KW-1185">Reference proteome</keyword>
<keyword id="KW-1277">Toxin-antitoxin system</keyword>
<proteinExistence type="inferred from homology"/>
<comment type="function">
    <text evidence="1">Toxic component of a type II toxin-antitoxin (TA) system. An RNase (By similarity).</text>
</comment>
<comment type="cofactor">
    <cofactor evidence="3">
        <name>Mg(2+)</name>
        <dbReference type="ChEBI" id="CHEBI:18420"/>
    </cofactor>
</comment>
<comment type="similarity">
    <text evidence="3">Belongs to the PINc/VapC protein family.</text>
</comment>
<dbReference type="EC" id="3.1.-.-"/>
<dbReference type="EMBL" id="AE000657">
    <property type="protein sequence ID" value="AAC07709.1"/>
    <property type="molecule type" value="Genomic_DNA"/>
</dbReference>
<dbReference type="RefSeq" id="NP_214307.1">
    <property type="nucleotide sequence ID" value="NC_000918.1"/>
</dbReference>
<dbReference type="RefSeq" id="WP_010881243.1">
    <property type="nucleotide sequence ID" value="NC_000918.1"/>
</dbReference>
<dbReference type="SMR" id="O67739"/>
<dbReference type="STRING" id="224324.aq_1899b"/>
<dbReference type="EnsemblBacteria" id="AAC07709">
    <property type="protein sequence ID" value="AAC07709"/>
    <property type="gene ID" value="aq_1899b"/>
</dbReference>
<dbReference type="KEGG" id="aae:aq_1899b"/>
<dbReference type="eggNOG" id="COG5611">
    <property type="taxonomic scope" value="Bacteria"/>
</dbReference>
<dbReference type="HOGENOM" id="CLU_121449_2_2_0"/>
<dbReference type="InParanoid" id="O67739"/>
<dbReference type="OrthoDB" id="15405at2"/>
<dbReference type="Proteomes" id="UP000000798">
    <property type="component" value="Chromosome"/>
</dbReference>
<dbReference type="GO" id="GO:0046872">
    <property type="term" value="F:metal ion binding"/>
    <property type="evidence" value="ECO:0007669"/>
    <property type="project" value="UniProtKB-KW"/>
</dbReference>
<dbReference type="GO" id="GO:0004518">
    <property type="term" value="F:nuclease activity"/>
    <property type="evidence" value="ECO:0007669"/>
    <property type="project" value="UniProtKB-KW"/>
</dbReference>
<dbReference type="Gene3D" id="3.40.50.1010">
    <property type="entry name" value="5'-nuclease"/>
    <property type="match status" value="1"/>
</dbReference>
<dbReference type="InterPro" id="IPR029060">
    <property type="entry name" value="PIN-like_dom_sf"/>
</dbReference>
<dbReference type="InterPro" id="IPR002716">
    <property type="entry name" value="PIN_dom"/>
</dbReference>
<dbReference type="Pfam" id="PF01850">
    <property type="entry name" value="PIN"/>
    <property type="match status" value="1"/>
</dbReference>
<dbReference type="SUPFAM" id="SSF88723">
    <property type="entry name" value="PIN domain-like"/>
    <property type="match status" value="1"/>
</dbReference>
<protein>
    <recommendedName>
        <fullName>VapC ribonuclease aq_1901</fullName>
        <shortName>RNase aq_1901</shortName>
        <ecNumber>3.1.-.-</ecNumber>
    </recommendedName>
    <alternativeName>
        <fullName>Toxin aq_1901</fullName>
    </alternativeName>
</protein>
<accession>O67739</accession>